<evidence type="ECO:0000250" key="1"/>
<evidence type="ECO:0000305" key="2"/>
<protein>
    <recommendedName>
        <fullName>Uncharacterized aminotransferase YcbU</fullName>
        <ecNumber>2.6.1.-</ecNumber>
    </recommendedName>
</protein>
<organism>
    <name type="scientific">Bacillus subtilis (strain 168)</name>
    <dbReference type="NCBI Taxonomy" id="224308"/>
    <lineage>
        <taxon>Bacteria</taxon>
        <taxon>Bacillati</taxon>
        <taxon>Bacillota</taxon>
        <taxon>Bacilli</taxon>
        <taxon>Bacillales</taxon>
        <taxon>Bacillaceae</taxon>
        <taxon>Bacillus</taxon>
    </lineage>
</organism>
<keyword id="KW-0032">Aminotransferase</keyword>
<keyword id="KW-0663">Pyridoxal phosphate</keyword>
<keyword id="KW-1185">Reference proteome</keyword>
<keyword id="KW-0808">Transferase</keyword>
<feature type="chain" id="PRO_0000001305" description="Uncharacterized aminotransferase YcbU">
    <location>
        <begin position="1"/>
        <end position="370"/>
    </location>
</feature>
<feature type="modified residue" description="N6-(pyridoxal phosphate)lysine" evidence="1">
    <location>
        <position position="207"/>
    </location>
</feature>
<feature type="sequence conflict" description="In Ref. 1; BAA22227 and 4; D30808." evidence="2" ref="1 4">
    <original>S</original>
    <variation>Y</variation>
    <location>
        <position position="92"/>
    </location>
</feature>
<feature type="sequence conflict" description="In Ref. 5; X66034." evidence="2" ref="5">
    <original>L</original>
    <variation>V</variation>
    <location>
        <position position="133"/>
    </location>
</feature>
<feature type="sequence conflict" description="In Ref. 4; D30808." evidence="2" ref="4">
    <original>D</original>
    <variation>I</variation>
    <location>
        <position position="319"/>
    </location>
</feature>
<gene>
    <name type="primary">ycbU</name>
    <name type="ordered locus">BSU02660</name>
</gene>
<reference key="1">
    <citation type="journal article" date="1997" name="Microbiology">
        <title>A 32 kb nucleotide sequence from the region of the lincomycin-resistance gene (22 degrees-25 degrees) of the Bacillus subtilis chromosome and identification of the site of the lin-2 mutation.</title>
        <authorList>
            <person name="Kumano M."/>
            <person name="Tamakoshi A."/>
            <person name="Yamane K."/>
        </authorList>
    </citation>
    <scope>NUCLEOTIDE SEQUENCE [GENOMIC DNA]</scope>
    <source>
        <strain>168</strain>
    </source>
</reference>
<reference key="2">
    <citation type="journal article" date="1997" name="Nature">
        <title>The complete genome sequence of the Gram-positive bacterium Bacillus subtilis.</title>
        <authorList>
            <person name="Kunst F."/>
            <person name="Ogasawara N."/>
            <person name="Moszer I."/>
            <person name="Albertini A.M."/>
            <person name="Alloni G."/>
            <person name="Azevedo V."/>
            <person name="Bertero M.G."/>
            <person name="Bessieres P."/>
            <person name="Bolotin A."/>
            <person name="Borchert S."/>
            <person name="Borriss R."/>
            <person name="Boursier L."/>
            <person name="Brans A."/>
            <person name="Braun M."/>
            <person name="Brignell S.C."/>
            <person name="Bron S."/>
            <person name="Brouillet S."/>
            <person name="Bruschi C.V."/>
            <person name="Caldwell B."/>
            <person name="Capuano V."/>
            <person name="Carter N.M."/>
            <person name="Choi S.-K."/>
            <person name="Codani J.-J."/>
            <person name="Connerton I.F."/>
            <person name="Cummings N.J."/>
            <person name="Daniel R.A."/>
            <person name="Denizot F."/>
            <person name="Devine K.M."/>
            <person name="Duesterhoeft A."/>
            <person name="Ehrlich S.D."/>
            <person name="Emmerson P.T."/>
            <person name="Entian K.-D."/>
            <person name="Errington J."/>
            <person name="Fabret C."/>
            <person name="Ferrari E."/>
            <person name="Foulger D."/>
            <person name="Fritz C."/>
            <person name="Fujita M."/>
            <person name="Fujita Y."/>
            <person name="Fuma S."/>
            <person name="Galizzi A."/>
            <person name="Galleron N."/>
            <person name="Ghim S.-Y."/>
            <person name="Glaser P."/>
            <person name="Goffeau A."/>
            <person name="Golightly E.J."/>
            <person name="Grandi G."/>
            <person name="Guiseppi G."/>
            <person name="Guy B.J."/>
            <person name="Haga K."/>
            <person name="Haiech J."/>
            <person name="Harwood C.R."/>
            <person name="Henaut A."/>
            <person name="Hilbert H."/>
            <person name="Holsappel S."/>
            <person name="Hosono S."/>
            <person name="Hullo M.-F."/>
            <person name="Itaya M."/>
            <person name="Jones L.-M."/>
            <person name="Joris B."/>
            <person name="Karamata D."/>
            <person name="Kasahara Y."/>
            <person name="Klaerr-Blanchard M."/>
            <person name="Klein C."/>
            <person name="Kobayashi Y."/>
            <person name="Koetter P."/>
            <person name="Koningstein G."/>
            <person name="Krogh S."/>
            <person name="Kumano M."/>
            <person name="Kurita K."/>
            <person name="Lapidus A."/>
            <person name="Lardinois S."/>
            <person name="Lauber J."/>
            <person name="Lazarevic V."/>
            <person name="Lee S.-M."/>
            <person name="Levine A."/>
            <person name="Liu H."/>
            <person name="Masuda S."/>
            <person name="Mauel C."/>
            <person name="Medigue C."/>
            <person name="Medina N."/>
            <person name="Mellado R.P."/>
            <person name="Mizuno M."/>
            <person name="Moestl D."/>
            <person name="Nakai S."/>
            <person name="Noback M."/>
            <person name="Noone D."/>
            <person name="O'Reilly M."/>
            <person name="Ogawa K."/>
            <person name="Ogiwara A."/>
            <person name="Oudega B."/>
            <person name="Park S.-H."/>
            <person name="Parro V."/>
            <person name="Pohl T.M."/>
            <person name="Portetelle D."/>
            <person name="Porwollik S."/>
            <person name="Prescott A.M."/>
            <person name="Presecan E."/>
            <person name="Pujic P."/>
            <person name="Purnelle B."/>
            <person name="Rapoport G."/>
            <person name="Rey M."/>
            <person name="Reynolds S."/>
            <person name="Rieger M."/>
            <person name="Rivolta C."/>
            <person name="Rocha E."/>
            <person name="Roche B."/>
            <person name="Rose M."/>
            <person name="Sadaie Y."/>
            <person name="Sato T."/>
            <person name="Scanlan E."/>
            <person name="Schleich S."/>
            <person name="Schroeter R."/>
            <person name="Scoffone F."/>
            <person name="Sekiguchi J."/>
            <person name="Sekowska A."/>
            <person name="Seror S.J."/>
            <person name="Serror P."/>
            <person name="Shin B.-S."/>
            <person name="Soldo B."/>
            <person name="Sorokin A."/>
            <person name="Tacconi E."/>
            <person name="Takagi T."/>
            <person name="Takahashi H."/>
            <person name="Takemaru K."/>
            <person name="Takeuchi M."/>
            <person name="Tamakoshi A."/>
            <person name="Tanaka T."/>
            <person name="Terpstra P."/>
            <person name="Tognoni A."/>
            <person name="Tosato V."/>
            <person name="Uchiyama S."/>
            <person name="Vandenbol M."/>
            <person name="Vannier F."/>
            <person name="Vassarotti A."/>
            <person name="Viari A."/>
            <person name="Wambutt R."/>
            <person name="Wedler E."/>
            <person name="Wedler H."/>
            <person name="Weitzenegger T."/>
            <person name="Winters P."/>
            <person name="Wipat A."/>
            <person name="Yamamoto H."/>
            <person name="Yamane K."/>
            <person name="Yasumoto K."/>
            <person name="Yata K."/>
            <person name="Yoshida K."/>
            <person name="Yoshikawa H.-F."/>
            <person name="Zumstein E."/>
            <person name="Yoshikawa H."/>
            <person name="Danchin A."/>
        </authorList>
    </citation>
    <scope>NUCLEOTIDE SEQUENCE [LARGE SCALE GENOMIC DNA]</scope>
    <source>
        <strain>168</strain>
    </source>
</reference>
<reference key="3">
    <citation type="journal article" date="2009" name="Microbiology">
        <title>From a consortium sequence to a unified sequence: the Bacillus subtilis 168 reference genome a decade later.</title>
        <authorList>
            <person name="Barbe V."/>
            <person name="Cruveiller S."/>
            <person name="Kunst F."/>
            <person name="Lenoble P."/>
            <person name="Meurice G."/>
            <person name="Sekowska A."/>
            <person name="Vallenet D."/>
            <person name="Wang T."/>
            <person name="Moszer I."/>
            <person name="Medigue C."/>
            <person name="Danchin A."/>
        </authorList>
    </citation>
    <scope>SEQUENCE REVISION TO 92</scope>
</reference>
<reference key="4">
    <citation type="journal article" date="1995" name="Microbiology">
        <title>Determination of a 21548 bp nucleotide sequence around the 24 degrees region of the Bacillus subtilis chromosome.</title>
        <authorList>
            <person name="Ogawa K."/>
            <person name="Akagawa E."/>
            <person name="Nakamura K."/>
            <person name="Yamane K."/>
        </authorList>
    </citation>
    <scope>NUCLEOTIDE SEQUENCE [GENOMIC DNA] OF 1-319</scope>
    <source>
        <strain>168</strain>
    </source>
</reference>
<reference key="5">
    <citation type="journal article" date="1992" name="FEBS Lett.">
        <title>Characterization of the pcp gene encoding the pyrrolidone carboxyl peptidase of Bacillus subtilis.</title>
        <authorList>
            <person name="Awade A."/>
            <person name="Cleuziat P."/>
            <person name="Gonzales T."/>
            <person name="Robert-Baudouy J."/>
        </authorList>
    </citation>
    <scope>NUCLEOTIDE SEQUENCE [GENOMIC DNA] OF 1-147</scope>
    <source>
        <strain>168</strain>
    </source>
</reference>
<comment type="cofactor">
    <cofactor evidence="1">
        <name>pyridoxal 5'-phosphate</name>
        <dbReference type="ChEBI" id="CHEBI:597326"/>
    </cofactor>
</comment>
<comment type="similarity">
    <text evidence="2">Belongs to the class-V pyridoxal-phosphate-dependent aminotransferase family.</text>
</comment>
<comment type="sequence caution" evidence="2">
    <conflict type="frameshift">
        <sequence resource="EMBL" id="X66034"/>
    </conflict>
</comment>
<name>YCBU_BACSU</name>
<sequence>MEHLPEQYRQLFPTLQTHTMLASCSQSALAEPVSRAIQDYYDSLLYKGTNWKEAIEKTEFARNEFAKLIGAEPDEVAIVPSVSDALVSVASSLTAFGKKHVVYTDMDFPAVPHVWQAHSDYTVSVIPSIDGVLPLEQYETHISDETVLTCVPHVHYRDGYVQDIKAIAEISQRKGSLLFVDAYQSAGHIPIDVKEWGVDMLAAGTRKYLLGIPGVAFLYVRKELADALKPKASAWFGRESGFDGAYAKVARRFQTGTPAFISVYAAAAALSLLNHIGVSHIRDHVKTICADAVQYAAEKGLQLAAAQGGIQPGMVAIRDERASETAGLLKKKKVICAPRENVIRLAPHFYNTKEEMRHAIDEIAAKTIHK</sequence>
<accession>P42253</accession>
<accession>O34388</accession>
<dbReference type="EC" id="2.6.1.-"/>
<dbReference type="EMBL" id="AB000617">
    <property type="protein sequence ID" value="BAA22227.1"/>
    <property type="molecule type" value="Genomic_DNA"/>
</dbReference>
<dbReference type="EMBL" id="AL009126">
    <property type="protein sequence ID" value="CAB12060.2"/>
    <property type="molecule type" value="Genomic_DNA"/>
</dbReference>
<dbReference type="EMBL" id="D30808">
    <property type="status" value="NOT_ANNOTATED_CDS"/>
    <property type="molecule type" value="Genomic_DNA"/>
</dbReference>
<dbReference type="EMBL" id="X66034">
    <property type="status" value="NOT_ANNOTATED_CDS"/>
    <property type="molecule type" value="Genomic_DNA"/>
</dbReference>
<dbReference type="PIR" id="E69754">
    <property type="entry name" value="E69754"/>
</dbReference>
<dbReference type="RefSeq" id="NP_388148.2">
    <property type="nucleotide sequence ID" value="NC_000964.3"/>
</dbReference>
<dbReference type="RefSeq" id="WP_003246392.1">
    <property type="nucleotide sequence ID" value="NZ_OZ025638.1"/>
</dbReference>
<dbReference type="SMR" id="P42253"/>
<dbReference type="FunCoup" id="P42253">
    <property type="interactions" value="77"/>
</dbReference>
<dbReference type="STRING" id="224308.BSU02660"/>
<dbReference type="PaxDb" id="224308-BSU02660"/>
<dbReference type="EnsemblBacteria" id="CAB12060">
    <property type="protein sequence ID" value="CAB12060"/>
    <property type="gene ID" value="BSU_02660"/>
</dbReference>
<dbReference type="GeneID" id="938393"/>
<dbReference type="KEGG" id="bsu:BSU02660"/>
<dbReference type="PATRIC" id="fig|224308.179.peg.276"/>
<dbReference type="eggNOG" id="COG0520">
    <property type="taxonomic scope" value="Bacteria"/>
</dbReference>
<dbReference type="InParanoid" id="P42253"/>
<dbReference type="OrthoDB" id="513408at2"/>
<dbReference type="PhylomeDB" id="P42253"/>
<dbReference type="BioCyc" id="BSUB:BSU02660-MONOMER"/>
<dbReference type="Proteomes" id="UP000001570">
    <property type="component" value="Chromosome"/>
</dbReference>
<dbReference type="GO" id="GO:0008483">
    <property type="term" value="F:transaminase activity"/>
    <property type="evidence" value="ECO:0007669"/>
    <property type="project" value="UniProtKB-KW"/>
</dbReference>
<dbReference type="Gene3D" id="3.90.1150.10">
    <property type="entry name" value="Aspartate Aminotransferase, domain 1"/>
    <property type="match status" value="1"/>
</dbReference>
<dbReference type="Gene3D" id="3.40.640.10">
    <property type="entry name" value="Type I PLP-dependent aspartate aminotransferase-like (Major domain)"/>
    <property type="match status" value="1"/>
</dbReference>
<dbReference type="InterPro" id="IPR000192">
    <property type="entry name" value="Aminotrans_V_dom"/>
</dbReference>
<dbReference type="InterPro" id="IPR020578">
    <property type="entry name" value="Aminotrans_V_PyrdxlP_BS"/>
</dbReference>
<dbReference type="InterPro" id="IPR015424">
    <property type="entry name" value="PyrdxlP-dep_Trfase"/>
</dbReference>
<dbReference type="InterPro" id="IPR015421">
    <property type="entry name" value="PyrdxlP-dep_Trfase_major"/>
</dbReference>
<dbReference type="InterPro" id="IPR015422">
    <property type="entry name" value="PyrdxlP-dep_Trfase_small"/>
</dbReference>
<dbReference type="PANTHER" id="PTHR43586:SF15">
    <property type="entry name" value="BLR3095 PROTEIN"/>
    <property type="match status" value="1"/>
</dbReference>
<dbReference type="PANTHER" id="PTHR43586">
    <property type="entry name" value="CYSTEINE DESULFURASE"/>
    <property type="match status" value="1"/>
</dbReference>
<dbReference type="Pfam" id="PF00266">
    <property type="entry name" value="Aminotran_5"/>
    <property type="match status" value="1"/>
</dbReference>
<dbReference type="SUPFAM" id="SSF53383">
    <property type="entry name" value="PLP-dependent transferases"/>
    <property type="match status" value="1"/>
</dbReference>
<dbReference type="PROSITE" id="PS00595">
    <property type="entry name" value="AA_TRANSFER_CLASS_5"/>
    <property type="match status" value="1"/>
</dbReference>
<proteinExistence type="inferred from homology"/>